<evidence type="ECO:0000255" key="1">
    <source>
        <dbReference type="HAMAP-Rule" id="MF_00034"/>
    </source>
</evidence>
<dbReference type="EC" id="3.1.21.10" evidence="1"/>
<dbReference type="EMBL" id="AP009384">
    <property type="protein sequence ID" value="BAF86511.1"/>
    <property type="molecule type" value="Genomic_DNA"/>
</dbReference>
<dbReference type="SMR" id="A8IM96"/>
<dbReference type="STRING" id="438753.AZC_0513"/>
<dbReference type="KEGG" id="azc:AZC_0513"/>
<dbReference type="eggNOG" id="COG0817">
    <property type="taxonomic scope" value="Bacteria"/>
</dbReference>
<dbReference type="HOGENOM" id="CLU_091257_1_0_5"/>
<dbReference type="Proteomes" id="UP000000270">
    <property type="component" value="Chromosome"/>
</dbReference>
<dbReference type="GO" id="GO:0005737">
    <property type="term" value="C:cytoplasm"/>
    <property type="evidence" value="ECO:0007669"/>
    <property type="project" value="UniProtKB-SubCell"/>
</dbReference>
<dbReference type="GO" id="GO:0048476">
    <property type="term" value="C:Holliday junction resolvase complex"/>
    <property type="evidence" value="ECO:0007669"/>
    <property type="project" value="UniProtKB-UniRule"/>
</dbReference>
<dbReference type="GO" id="GO:0008821">
    <property type="term" value="F:crossover junction DNA endonuclease activity"/>
    <property type="evidence" value="ECO:0007669"/>
    <property type="project" value="UniProtKB-UniRule"/>
</dbReference>
<dbReference type="GO" id="GO:0003677">
    <property type="term" value="F:DNA binding"/>
    <property type="evidence" value="ECO:0007669"/>
    <property type="project" value="UniProtKB-KW"/>
</dbReference>
<dbReference type="GO" id="GO:0000287">
    <property type="term" value="F:magnesium ion binding"/>
    <property type="evidence" value="ECO:0007669"/>
    <property type="project" value="UniProtKB-UniRule"/>
</dbReference>
<dbReference type="GO" id="GO:0006310">
    <property type="term" value="P:DNA recombination"/>
    <property type="evidence" value="ECO:0007669"/>
    <property type="project" value="UniProtKB-UniRule"/>
</dbReference>
<dbReference type="GO" id="GO:0006281">
    <property type="term" value="P:DNA repair"/>
    <property type="evidence" value="ECO:0007669"/>
    <property type="project" value="UniProtKB-UniRule"/>
</dbReference>
<dbReference type="CDD" id="cd16962">
    <property type="entry name" value="RuvC"/>
    <property type="match status" value="1"/>
</dbReference>
<dbReference type="FunFam" id="3.30.420.10:FF:000002">
    <property type="entry name" value="Crossover junction endodeoxyribonuclease RuvC"/>
    <property type="match status" value="1"/>
</dbReference>
<dbReference type="Gene3D" id="3.30.420.10">
    <property type="entry name" value="Ribonuclease H-like superfamily/Ribonuclease H"/>
    <property type="match status" value="1"/>
</dbReference>
<dbReference type="HAMAP" id="MF_00034">
    <property type="entry name" value="RuvC"/>
    <property type="match status" value="1"/>
</dbReference>
<dbReference type="InterPro" id="IPR012337">
    <property type="entry name" value="RNaseH-like_sf"/>
</dbReference>
<dbReference type="InterPro" id="IPR036397">
    <property type="entry name" value="RNaseH_sf"/>
</dbReference>
<dbReference type="InterPro" id="IPR020563">
    <property type="entry name" value="X-over_junc_endoDNase_Mg_BS"/>
</dbReference>
<dbReference type="InterPro" id="IPR002176">
    <property type="entry name" value="X-over_junc_endoDNase_RuvC"/>
</dbReference>
<dbReference type="NCBIfam" id="TIGR00228">
    <property type="entry name" value="ruvC"/>
    <property type="match status" value="1"/>
</dbReference>
<dbReference type="PANTHER" id="PTHR30194">
    <property type="entry name" value="CROSSOVER JUNCTION ENDODEOXYRIBONUCLEASE RUVC"/>
    <property type="match status" value="1"/>
</dbReference>
<dbReference type="PANTHER" id="PTHR30194:SF3">
    <property type="entry name" value="CROSSOVER JUNCTION ENDODEOXYRIBONUCLEASE RUVC"/>
    <property type="match status" value="1"/>
</dbReference>
<dbReference type="Pfam" id="PF02075">
    <property type="entry name" value="RuvC"/>
    <property type="match status" value="1"/>
</dbReference>
<dbReference type="PRINTS" id="PR00696">
    <property type="entry name" value="RSOLVASERUVC"/>
</dbReference>
<dbReference type="SUPFAM" id="SSF53098">
    <property type="entry name" value="Ribonuclease H-like"/>
    <property type="match status" value="1"/>
</dbReference>
<dbReference type="PROSITE" id="PS01321">
    <property type="entry name" value="RUVC"/>
    <property type="match status" value="1"/>
</dbReference>
<keyword id="KW-0963">Cytoplasm</keyword>
<keyword id="KW-0227">DNA damage</keyword>
<keyword id="KW-0233">DNA recombination</keyword>
<keyword id="KW-0234">DNA repair</keyword>
<keyword id="KW-0238">DNA-binding</keyword>
<keyword id="KW-0255">Endonuclease</keyword>
<keyword id="KW-0378">Hydrolase</keyword>
<keyword id="KW-0460">Magnesium</keyword>
<keyword id="KW-0479">Metal-binding</keyword>
<keyword id="KW-0540">Nuclease</keyword>
<keyword id="KW-1185">Reference proteome</keyword>
<reference key="1">
    <citation type="submission" date="2007-04" db="EMBL/GenBank/DDBJ databases">
        <title>Complete genome sequence of the nitrogen-fixing bacterium Azorhizobium caulinodans ORS571.</title>
        <authorList>
            <person name="Lee K.B."/>
            <person name="Backer P.D."/>
            <person name="Aono T."/>
            <person name="Liu C.T."/>
            <person name="Suzuki S."/>
            <person name="Suzuki T."/>
            <person name="Kaneko T."/>
            <person name="Yamada M."/>
            <person name="Tabata S."/>
            <person name="Kupfer D.M."/>
            <person name="Najar F.Z."/>
            <person name="Wiley G.B."/>
            <person name="Roe B."/>
            <person name="Binnewies T."/>
            <person name="Ussery D."/>
            <person name="Vereecke D."/>
            <person name="Gevers D."/>
            <person name="Holsters M."/>
            <person name="Oyaizu H."/>
        </authorList>
    </citation>
    <scope>NUCLEOTIDE SEQUENCE [LARGE SCALE GENOMIC DNA]</scope>
    <source>
        <strain>ATCC 43989 / DSM 5975 / JCM 20966 / LMG 6465 / NBRC 14845 / NCIMB 13405 / ORS 571</strain>
    </source>
</reference>
<feature type="chain" id="PRO_1000071030" description="Crossover junction endodeoxyribonuclease RuvC">
    <location>
        <begin position="1"/>
        <end position="169"/>
    </location>
</feature>
<feature type="active site" evidence="1">
    <location>
        <position position="12"/>
    </location>
</feature>
<feature type="active site" evidence="1">
    <location>
        <position position="72"/>
    </location>
</feature>
<feature type="active site" evidence="1">
    <location>
        <position position="144"/>
    </location>
</feature>
<feature type="binding site" evidence="1">
    <location>
        <position position="12"/>
    </location>
    <ligand>
        <name>Mg(2+)</name>
        <dbReference type="ChEBI" id="CHEBI:18420"/>
        <label>1</label>
    </ligand>
</feature>
<feature type="binding site" evidence="1">
    <location>
        <position position="72"/>
    </location>
    <ligand>
        <name>Mg(2+)</name>
        <dbReference type="ChEBI" id="CHEBI:18420"/>
        <label>2</label>
    </ligand>
</feature>
<feature type="binding site" evidence="1">
    <location>
        <position position="144"/>
    </location>
    <ligand>
        <name>Mg(2+)</name>
        <dbReference type="ChEBI" id="CHEBI:18420"/>
        <label>1</label>
    </ligand>
</feature>
<gene>
    <name evidence="1" type="primary">ruvC</name>
    <name type="ordered locus">AZC_0513</name>
</gene>
<accession>A8IM96</accession>
<sequence length="169" mass="17794">MTNGMIRIIGLDPGLRRTGWGVIEAQGTRLTYVACGTILPPENAPMAERLAELHRGLAEVLARHAPDEAAVEETFVNMNPSSTLKLGQARGVVMLAPAQAGLSVAEYAPLLVKKTVVGAGRAEKAQIRMMIGVLLPKATPQTEDAADALAVAVTHAHHRGPAALRRAAL</sequence>
<proteinExistence type="inferred from homology"/>
<comment type="function">
    <text evidence="1">The RuvA-RuvB-RuvC complex processes Holliday junction (HJ) DNA during genetic recombination and DNA repair. Endonuclease that resolves HJ intermediates. Cleaves cruciform DNA by making single-stranded nicks across the HJ at symmetrical positions within the homologous arms, yielding a 5'-phosphate and a 3'-hydroxyl group; requires a central core of homology in the junction. The consensus cleavage sequence is 5'-(A/T)TT(C/G)-3'. Cleavage occurs on the 3'-side of the TT dinucleotide at the point of strand exchange. HJ branch migration catalyzed by RuvA-RuvB allows RuvC to scan DNA until it finds its consensus sequence, where it cleaves and resolves the cruciform DNA.</text>
</comment>
<comment type="catalytic activity">
    <reaction evidence="1">
        <text>Endonucleolytic cleavage at a junction such as a reciprocal single-stranded crossover between two homologous DNA duplexes (Holliday junction).</text>
        <dbReference type="EC" id="3.1.21.10"/>
    </reaction>
</comment>
<comment type="cofactor">
    <cofactor evidence="1">
        <name>Mg(2+)</name>
        <dbReference type="ChEBI" id="CHEBI:18420"/>
    </cofactor>
    <text evidence="1">Binds 2 Mg(2+) ion per subunit.</text>
</comment>
<comment type="subunit">
    <text evidence="1">Homodimer which binds Holliday junction (HJ) DNA. The HJ becomes 2-fold symmetrical on binding to RuvC with unstacked arms; it has a different conformation from HJ DNA in complex with RuvA. In the full resolvosome a probable DNA-RuvA(4)-RuvB(12)-RuvC(2) complex forms which resolves the HJ.</text>
</comment>
<comment type="subcellular location">
    <subcellularLocation>
        <location evidence="1">Cytoplasm</location>
    </subcellularLocation>
</comment>
<comment type="similarity">
    <text evidence="1">Belongs to the RuvC family.</text>
</comment>
<name>RUVC_AZOC5</name>
<protein>
    <recommendedName>
        <fullName evidence="1">Crossover junction endodeoxyribonuclease RuvC</fullName>
        <ecNumber evidence="1">3.1.21.10</ecNumber>
    </recommendedName>
    <alternativeName>
        <fullName evidence="1">Holliday junction nuclease RuvC</fullName>
    </alternativeName>
    <alternativeName>
        <fullName evidence="1">Holliday junction resolvase RuvC</fullName>
    </alternativeName>
</protein>
<organism>
    <name type="scientific">Azorhizobium caulinodans (strain ATCC 43989 / DSM 5975 / JCM 20966 / LMG 6465 / NBRC 14845 / NCIMB 13405 / ORS 571)</name>
    <dbReference type="NCBI Taxonomy" id="438753"/>
    <lineage>
        <taxon>Bacteria</taxon>
        <taxon>Pseudomonadati</taxon>
        <taxon>Pseudomonadota</taxon>
        <taxon>Alphaproteobacteria</taxon>
        <taxon>Hyphomicrobiales</taxon>
        <taxon>Xanthobacteraceae</taxon>
        <taxon>Azorhizobium</taxon>
    </lineage>
</organism>